<gene>
    <name type="primary">Tbcd</name>
</gene>
<organism>
    <name type="scientific">Mus musculus</name>
    <name type="common">Mouse</name>
    <dbReference type="NCBI Taxonomy" id="10090"/>
    <lineage>
        <taxon>Eukaryota</taxon>
        <taxon>Metazoa</taxon>
        <taxon>Chordata</taxon>
        <taxon>Craniata</taxon>
        <taxon>Vertebrata</taxon>
        <taxon>Euteleostomi</taxon>
        <taxon>Mammalia</taxon>
        <taxon>Eutheria</taxon>
        <taxon>Euarchontoglires</taxon>
        <taxon>Glires</taxon>
        <taxon>Rodentia</taxon>
        <taxon>Myomorpha</taxon>
        <taxon>Muroidea</taxon>
        <taxon>Muridae</taxon>
        <taxon>Murinae</taxon>
        <taxon>Mus</taxon>
        <taxon>Mus</taxon>
    </lineage>
</organism>
<sequence length="1196" mass="133321">MVLSNEPAASAAEEEVEDDALVRASALEAFGESAETRALLRSLPAVHRERASREVAEERFRVIMDKYQEQPHLLDPHLEWMMNSLLDLVQDETSLPDLVHLAFKFLYIITKVRGYKVFLRLFPHEVANVQPVLDMFTGQNPKDHETWETRYMLLLWLSVTCLIPFDFSRLDGNLSTQTGETRVPTMDRILQIAESYLVVSDKARDAAAVLVSKFITRPDVKQRKMASFLDWSLCTLAHSSFQTIEGVITMDGMLQALAQIFKHGKREDCLPYANTVLQCLDGCRLPESSHTSLRKLGVKLVQRLGLTFLKPKVATWRYQRGCRSLAANLKLCAPGKSDQKLLSDSLTSDGDEDYDVPEGVETVIEQLLVGLKDKDTVVRWSAAKGIGRMAGRLPRELADDVVGSVLDCFSFQETDKAWHGGCLALAELGRRGLLLPSRLSEVVTVILKALTYDEKRGACSVGANVRDAACYVCWAFARAYEPQELTPFVTAISSALVIAAVFDRNVNCRRAASAAFQENVGRQGTFPHGIDILTTADYFAVGNISNCFLIISVFIAGFQEYTKPMIDHLVSMKINHWDGAIRELSAKALHNLTPQVPEYIAMHVFPALLLMTQSPDLHTRHGAILACAEVTYALYKLATQSNRLVTDYLDEKAVQSLKQIHQQLCDRHLYRGLGGELMRQAVCILIEKLSLSRMPFKGDATVEGWQWLINDTLRSLHLVSSHSRQQIKEVAVSALTALCSEYYVKEPGEAGSSIAKELIPQYLAELQSPEEMARCGFSSALGALPGFLLRGHLQQVLSGLRRVTCISPNDVSFAEARRDGLKAISRICQTVGVNTRGPPDEVICKENISEVYAALLGCMSDYTTDSRGDVGAWVREAAMTSLMDLMLLLARTEPVLIEAHICERVMCCVAQQASEKIDRFRAHAARVFLTLLHFDSPPIPHVPHRQELESLFPRSDVATVNWNAPSQAFPLITQLLGLPTYRYHVLLGLAVSVGGLTESTVRHSTQSLFEYMKGIQKDAQVLQSFSETLLKVFEDNLLNDRVSVSLLKMLDQLLANGCFDIFTAEENHPFCVKLLTLCKEEIKKSKDIQKLRSSIAVLCGMVQFNGDVRKKILLQLFLLLGHPFPVIRKSTASQVYEMVLTYSDLVDAEVLDEVMSVLSDTAWDAELPVVREQRNRLCDLLGVPRPQLVPKPIPGS</sequence>
<name>TBCD_MOUSE</name>
<comment type="function">
    <text evidence="1 2">Tubulin-folding protein implicated in the first step of the tubulin folding pathway and required for tubulin complex assembly. Involved in the regulation of microtubule polymerization or depolymerization, it modulates microtubule dynamics by capturing GTP-bound beta-tubulin (TUBB). Its ability to interact with beta tubulin is regulated via its interaction with ARL2. Acts as a GTPase-activating protein (GAP) for ARL2. Induces microtubule disruption in absence of ARL2. Increases degradation of beta tubulin, when overexpressed in polarized cells. Promotes epithelial cell detachment, a process antagonized by ARL2. Induces tight adherens and tight junctions disassembly at the lateral cell membrane. Required for correct assembly and maintenance of the mitotic spindle, and proper progression of mitosis. Involved in neuron morphogenesis.</text>
</comment>
<comment type="subunit">
    <text evidence="1 2">Found in a complex with at least ARL2, PPP2CB, PPP2R1A, PPP2R2A, PPP2R5E and TBCD. Interacts with PPP2CB (By similarity). Part of a supercomplex made of cofactors A to E. Cofactors A and D function by capturing and stabilizing tubulin in a quasi-native conformation. Cofactor E binds to the cofactor D-tubulin complex; interaction with cofactor C then causes the release of tubulin polypeptides that are committed to the native state. Interacts with ARL2; interaction is enhanced with the GDP-bound form of ARL2. Does not interact with ARL3, ARL4A and ARL4D. Interacts with beta tubulin. Interacts with TBCE (By similarity).</text>
</comment>
<comment type="subcellular location">
    <subcellularLocation>
        <location evidence="1">Cell junction</location>
        <location evidence="1">Tight junction</location>
    </subcellularLocation>
    <subcellularLocation>
        <location evidence="1">Lateral cell membrane</location>
    </subcellularLocation>
    <subcellularLocation>
        <location evidence="1">Cytoplasm</location>
    </subcellularLocation>
    <subcellularLocation>
        <location evidence="1">Cell junction</location>
        <location evidence="1">Adherens junction</location>
    </subcellularLocation>
    <subcellularLocation>
        <location evidence="2">Cytoplasm</location>
        <location evidence="2">Cytoskeleton</location>
        <location evidence="2">Microtubule organizing center</location>
        <location evidence="2">Centrosome</location>
    </subcellularLocation>
    <text evidence="1">Localized in cell-cell contacts.</text>
</comment>
<comment type="similarity">
    <text evidence="3">Belongs to the TBCD family.</text>
</comment>
<dbReference type="EMBL" id="AK041464">
    <property type="protein sequence ID" value="BAC30951.1"/>
    <property type="molecule type" value="mRNA"/>
</dbReference>
<dbReference type="EMBL" id="BC059843">
    <property type="protein sequence ID" value="AAH59843.1"/>
    <property type="molecule type" value="mRNA"/>
</dbReference>
<dbReference type="CCDS" id="CCDS25778.1"/>
<dbReference type="RefSeq" id="NP_084154.1">
    <property type="nucleotide sequence ID" value="NM_029878.4"/>
</dbReference>
<dbReference type="BioGRID" id="224462">
    <property type="interactions" value="20"/>
</dbReference>
<dbReference type="FunCoup" id="Q8BYA0">
    <property type="interactions" value="2300"/>
</dbReference>
<dbReference type="STRING" id="10090.ENSMUSP00000099302"/>
<dbReference type="iPTMnet" id="Q8BYA0"/>
<dbReference type="PhosphoSitePlus" id="Q8BYA0"/>
<dbReference type="SwissPalm" id="Q8BYA0"/>
<dbReference type="jPOST" id="Q8BYA0"/>
<dbReference type="PaxDb" id="10090-ENSMUSP00000099302"/>
<dbReference type="PeptideAtlas" id="Q8BYA0"/>
<dbReference type="ProteomicsDB" id="262948"/>
<dbReference type="Pumba" id="Q8BYA0"/>
<dbReference type="Antibodypedia" id="33047">
    <property type="antibodies" value="75 antibodies from 20 providers"/>
</dbReference>
<dbReference type="DNASU" id="108903"/>
<dbReference type="Ensembl" id="ENSMUST00000103013.10">
    <property type="protein sequence ID" value="ENSMUSP00000099302.4"/>
    <property type="gene ID" value="ENSMUSG00000039230.15"/>
</dbReference>
<dbReference type="GeneID" id="108903"/>
<dbReference type="KEGG" id="mmu:108903"/>
<dbReference type="UCSC" id="uc007mvy.2">
    <property type="organism name" value="mouse"/>
</dbReference>
<dbReference type="AGR" id="MGI:1919686"/>
<dbReference type="CTD" id="6904"/>
<dbReference type="MGI" id="MGI:1919686">
    <property type="gene designation" value="Tbcd"/>
</dbReference>
<dbReference type="VEuPathDB" id="HostDB:ENSMUSG00000039230"/>
<dbReference type="eggNOG" id="KOG1943">
    <property type="taxonomic scope" value="Eukaryota"/>
</dbReference>
<dbReference type="GeneTree" id="ENSGT00390000017103"/>
<dbReference type="HOGENOM" id="CLU_003043_0_0_1"/>
<dbReference type="InParanoid" id="Q8BYA0"/>
<dbReference type="OMA" id="EPHEAWH"/>
<dbReference type="OrthoDB" id="10253476at2759"/>
<dbReference type="PhylomeDB" id="Q8BYA0"/>
<dbReference type="TreeFam" id="TF105754"/>
<dbReference type="BioGRID-ORCS" id="108903">
    <property type="hits" value="25 hits in 81 CRISPR screens"/>
</dbReference>
<dbReference type="ChiTaRS" id="Tbcd">
    <property type="organism name" value="mouse"/>
</dbReference>
<dbReference type="PRO" id="PR:Q8BYA0"/>
<dbReference type="Proteomes" id="UP000000589">
    <property type="component" value="Chromosome 11"/>
</dbReference>
<dbReference type="RNAct" id="Q8BYA0">
    <property type="molecule type" value="protein"/>
</dbReference>
<dbReference type="Bgee" id="ENSMUSG00000039230">
    <property type="expression patterns" value="Expressed in epithelium of lens and 248 other cell types or tissues"/>
</dbReference>
<dbReference type="ExpressionAtlas" id="Q8BYA0">
    <property type="expression patterns" value="baseline and differential"/>
</dbReference>
<dbReference type="GO" id="GO:0005912">
    <property type="term" value="C:adherens junction"/>
    <property type="evidence" value="ECO:0007669"/>
    <property type="project" value="UniProtKB-SubCell"/>
</dbReference>
<dbReference type="GO" id="GO:0005923">
    <property type="term" value="C:bicellular tight junction"/>
    <property type="evidence" value="ECO:0000250"/>
    <property type="project" value="UniProtKB"/>
</dbReference>
<dbReference type="GO" id="GO:0005813">
    <property type="term" value="C:centrosome"/>
    <property type="evidence" value="ECO:0000250"/>
    <property type="project" value="UniProtKB"/>
</dbReference>
<dbReference type="GO" id="GO:0005737">
    <property type="term" value="C:cytoplasm"/>
    <property type="evidence" value="ECO:0007669"/>
    <property type="project" value="UniProtKB-SubCell"/>
</dbReference>
<dbReference type="GO" id="GO:0016328">
    <property type="term" value="C:lateral plasma membrane"/>
    <property type="evidence" value="ECO:0000250"/>
    <property type="project" value="UniProtKB"/>
</dbReference>
<dbReference type="GO" id="GO:0048487">
    <property type="term" value="F:beta-tubulin binding"/>
    <property type="evidence" value="ECO:0000250"/>
    <property type="project" value="UniProtKB"/>
</dbReference>
<dbReference type="GO" id="GO:0005096">
    <property type="term" value="F:GTPase activator activity"/>
    <property type="evidence" value="ECO:0000250"/>
    <property type="project" value="UniProtKB"/>
</dbReference>
<dbReference type="GO" id="GO:0034333">
    <property type="term" value="P:adherens junction assembly"/>
    <property type="evidence" value="ECO:0000250"/>
    <property type="project" value="UniProtKB"/>
</dbReference>
<dbReference type="GO" id="GO:0070830">
    <property type="term" value="P:bicellular tight junction assembly"/>
    <property type="evidence" value="ECO:0000250"/>
    <property type="project" value="UniProtKB"/>
</dbReference>
<dbReference type="GO" id="GO:0048667">
    <property type="term" value="P:cell morphogenesis involved in neuron differentiation"/>
    <property type="evidence" value="ECO:0000250"/>
    <property type="project" value="UniProtKB"/>
</dbReference>
<dbReference type="GO" id="GO:0000278">
    <property type="term" value="P:mitotic cell cycle"/>
    <property type="evidence" value="ECO:0000250"/>
    <property type="project" value="UniProtKB"/>
</dbReference>
<dbReference type="GO" id="GO:0010812">
    <property type="term" value="P:negative regulation of cell-substrate adhesion"/>
    <property type="evidence" value="ECO:0000250"/>
    <property type="project" value="UniProtKB"/>
</dbReference>
<dbReference type="GO" id="GO:0031115">
    <property type="term" value="P:negative regulation of microtubule polymerization"/>
    <property type="evidence" value="ECO:0000250"/>
    <property type="project" value="UniProtKB"/>
</dbReference>
<dbReference type="GO" id="GO:0007023">
    <property type="term" value="P:post-chaperonin tubulin folding pathway"/>
    <property type="evidence" value="ECO:0000250"/>
    <property type="project" value="UniProtKB"/>
</dbReference>
<dbReference type="GO" id="GO:0006457">
    <property type="term" value="P:protein folding"/>
    <property type="evidence" value="ECO:0000250"/>
    <property type="project" value="UniProtKB"/>
</dbReference>
<dbReference type="GO" id="GO:0007021">
    <property type="term" value="P:tubulin complex assembly"/>
    <property type="evidence" value="ECO:0007669"/>
    <property type="project" value="Ensembl"/>
</dbReference>
<dbReference type="FunFam" id="1.25.10.10:FF:000268">
    <property type="entry name" value="tubulin-specific chaperone D"/>
    <property type="match status" value="1"/>
</dbReference>
<dbReference type="Gene3D" id="1.25.10.10">
    <property type="entry name" value="Leucine-rich Repeat Variant"/>
    <property type="match status" value="2"/>
</dbReference>
<dbReference type="InterPro" id="IPR011989">
    <property type="entry name" value="ARM-like"/>
</dbReference>
<dbReference type="InterPro" id="IPR016024">
    <property type="entry name" value="ARM-type_fold"/>
</dbReference>
<dbReference type="InterPro" id="IPR033162">
    <property type="entry name" value="TBCD"/>
</dbReference>
<dbReference type="InterPro" id="IPR022577">
    <property type="entry name" value="Tubulin_specific_chaperoneD_C"/>
</dbReference>
<dbReference type="PANTHER" id="PTHR12658">
    <property type="entry name" value="BETA-TUBULIN COFACTOR D"/>
    <property type="match status" value="1"/>
</dbReference>
<dbReference type="PANTHER" id="PTHR12658:SF0">
    <property type="entry name" value="TUBULIN-SPECIFIC CHAPERONE D"/>
    <property type="match status" value="1"/>
</dbReference>
<dbReference type="Pfam" id="PF23579">
    <property type="entry name" value="ARM_TBCD"/>
    <property type="match status" value="1"/>
</dbReference>
<dbReference type="Pfam" id="PF12612">
    <property type="entry name" value="TFCD_C"/>
    <property type="match status" value="1"/>
</dbReference>
<dbReference type="SUPFAM" id="SSF48371">
    <property type="entry name" value="ARM repeat"/>
    <property type="match status" value="2"/>
</dbReference>
<evidence type="ECO:0000250" key="1">
    <source>
        <dbReference type="UniProtKB" id="Q28205"/>
    </source>
</evidence>
<evidence type="ECO:0000250" key="2">
    <source>
        <dbReference type="UniProtKB" id="Q9BTW9"/>
    </source>
</evidence>
<evidence type="ECO:0000305" key="3"/>
<keyword id="KW-0965">Cell junction</keyword>
<keyword id="KW-1003">Cell membrane</keyword>
<keyword id="KW-0143">Chaperone</keyword>
<keyword id="KW-0963">Cytoplasm</keyword>
<keyword id="KW-0206">Cytoskeleton</keyword>
<keyword id="KW-0343">GTPase activation</keyword>
<keyword id="KW-0472">Membrane</keyword>
<keyword id="KW-1185">Reference proteome</keyword>
<keyword id="KW-0677">Repeat</keyword>
<keyword id="KW-0796">Tight junction</keyword>
<reference key="1">
    <citation type="journal article" date="2005" name="Science">
        <title>The transcriptional landscape of the mammalian genome.</title>
        <authorList>
            <person name="Carninci P."/>
            <person name="Kasukawa T."/>
            <person name="Katayama S."/>
            <person name="Gough J."/>
            <person name="Frith M.C."/>
            <person name="Maeda N."/>
            <person name="Oyama R."/>
            <person name="Ravasi T."/>
            <person name="Lenhard B."/>
            <person name="Wells C."/>
            <person name="Kodzius R."/>
            <person name="Shimokawa K."/>
            <person name="Bajic V.B."/>
            <person name="Brenner S.E."/>
            <person name="Batalov S."/>
            <person name="Forrest A.R."/>
            <person name="Zavolan M."/>
            <person name="Davis M.J."/>
            <person name="Wilming L.G."/>
            <person name="Aidinis V."/>
            <person name="Allen J.E."/>
            <person name="Ambesi-Impiombato A."/>
            <person name="Apweiler R."/>
            <person name="Aturaliya R.N."/>
            <person name="Bailey T.L."/>
            <person name="Bansal M."/>
            <person name="Baxter L."/>
            <person name="Beisel K.W."/>
            <person name="Bersano T."/>
            <person name="Bono H."/>
            <person name="Chalk A.M."/>
            <person name="Chiu K.P."/>
            <person name="Choudhary V."/>
            <person name="Christoffels A."/>
            <person name="Clutterbuck D.R."/>
            <person name="Crowe M.L."/>
            <person name="Dalla E."/>
            <person name="Dalrymple B.P."/>
            <person name="de Bono B."/>
            <person name="Della Gatta G."/>
            <person name="di Bernardo D."/>
            <person name="Down T."/>
            <person name="Engstrom P."/>
            <person name="Fagiolini M."/>
            <person name="Faulkner G."/>
            <person name="Fletcher C.F."/>
            <person name="Fukushima T."/>
            <person name="Furuno M."/>
            <person name="Futaki S."/>
            <person name="Gariboldi M."/>
            <person name="Georgii-Hemming P."/>
            <person name="Gingeras T.R."/>
            <person name="Gojobori T."/>
            <person name="Green R.E."/>
            <person name="Gustincich S."/>
            <person name="Harbers M."/>
            <person name="Hayashi Y."/>
            <person name="Hensch T.K."/>
            <person name="Hirokawa N."/>
            <person name="Hill D."/>
            <person name="Huminiecki L."/>
            <person name="Iacono M."/>
            <person name="Ikeo K."/>
            <person name="Iwama A."/>
            <person name="Ishikawa T."/>
            <person name="Jakt M."/>
            <person name="Kanapin A."/>
            <person name="Katoh M."/>
            <person name="Kawasawa Y."/>
            <person name="Kelso J."/>
            <person name="Kitamura H."/>
            <person name="Kitano H."/>
            <person name="Kollias G."/>
            <person name="Krishnan S.P."/>
            <person name="Kruger A."/>
            <person name="Kummerfeld S.K."/>
            <person name="Kurochkin I.V."/>
            <person name="Lareau L.F."/>
            <person name="Lazarevic D."/>
            <person name="Lipovich L."/>
            <person name="Liu J."/>
            <person name="Liuni S."/>
            <person name="McWilliam S."/>
            <person name="Madan Babu M."/>
            <person name="Madera M."/>
            <person name="Marchionni L."/>
            <person name="Matsuda H."/>
            <person name="Matsuzawa S."/>
            <person name="Miki H."/>
            <person name="Mignone F."/>
            <person name="Miyake S."/>
            <person name="Morris K."/>
            <person name="Mottagui-Tabar S."/>
            <person name="Mulder N."/>
            <person name="Nakano N."/>
            <person name="Nakauchi H."/>
            <person name="Ng P."/>
            <person name="Nilsson R."/>
            <person name="Nishiguchi S."/>
            <person name="Nishikawa S."/>
            <person name="Nori F."/>
            <person name="Ohara O."/>
            <person name="Okazaki Y."/>
            <person name="Orlando V."/>
            <person name="Pang K.C."/>
            <person name="Pavan W.J."/>
            <person name="Pavesi G."/>
            <person name="Pesole G."/>
            <person name="Petrovsky N."/>
            <person name="Piazza S."/>
            <person name="Reed J."/>
            <person name="Reid J.F."/>
            <person name="Ring B.Z."/>
            <person name="Ringwald M."/>
            <person name="Rost B."/>
            <person name="Ruan Y."/>
            <person name="Salzberg S.L."/>
            <person name="Sandelin A."/>
            <person name="Schneider C."/>
            <person name="Schoenbach C."/>
            <person name="Sekiguchi K."/>
            <person name="Semple C.A."/>
            <person name="Seno S."/>
            <person name="Sessa L."/>
            <person name="Sheng Y."/>
            <person name="Shibata Y."/>
            <person name="Shimada H."/>
            <person name="Shimada K."/>
            <person name="Silva D."/>
            <person name="Sinclair B."/>
            <person name="Sperling S."/>
            <person name="Stupka E."/>
            <person name="Sugiura K."/>
            <person name="Sultana R."/>
            <person name="Takenaka Y."/>
            <person name="Taki K."/>
            <person name="Tammoja K."/>
            <person name="Tan S.L."/>
            <person name="Tang S."/>
            <person name="Taylor M.S."/>
            <person name="Tegner J."/>
            <person name="Teichmann S.A."/>
            <person name="Ueda H.R."/>
            <person name="van Nimwegen E."/>
            <person name="Verardo R."/>
            <person name="Wei C.L."/>
            <person name="Yagi K."/>
            <person name="Yamanishi H."/>
            <person name="Zabarovsky E."/>
            <person name="Zhu S."/>
            <person name="Zimmer A."/>
            <person name="Hide W."/>
            <person name="Bult C."/>
            <person name="Grimmond S.M."/>
            <person name="Teasdale R.D."/>
            <person name="Liu E.T."/>
            <person name="Brusic V."/>
            <person name="Quackenbush J."/>
            <person name="Wahlestedt C."/>
            <person name="Mattick J.S."/>
            <person name="Hume D.A."/>
            <person name="Kai C."/>
            <person name="Sasaki D."/>
            <person name="Tomaru Y."/>
            <person name="Fukuda S."/>
            <person name="Kanamori-Katayama M."/>
            <person name="Suzuki M."/>
            <person name="Aoki J."/>
            <person name="Arakawa T."/>
            <person name="Iida J."/>
            <person name="Imamura K."/>
            <person name="Itoh M."/>
            <person name="Kato T."/>
            <person name="Kawaji H."/>
            <person name="Kawagashira N."/>
            <person name="Kawashima T."/>
            <person name="Kojima M."/>
            <person name="Kondo S."/>
            <person name="Konno H."/>
            <person name="Nakano K."/>
            <person name="Ninomiya N."/>
            <person name="Nishio T."/>
            <person name="Okada M."/>
            <person name="Plessy C."/>
            <person name="Shibata K."/>
            <person name="Shiraki T."/>
            <person name="Suzuki S."/>
            <person name="Tagami M."/>
            <person name="Waki K."/>
            <person name="Watahiki A."/>
            <person name="Okamura-Oho Y."/>
            <person name="Suzuki H."/>
            <person name="Kawai J."/>
            <person name="Hayashizaki Y."/>
        </authorList>
    </citation>
    <scope>NUCLEOTIDE SEQUENCE [LARGE SCALE MRNA]</scope>
    <source>
        <strain>C57BL/6J</strain>
        <tissue>Thymus</tissue>
    </source>
</reference>
<reference key="2">
    <citation type="journal article" date="2004" name="Genome Res.">
        <title>The status, quality, and expansion of the NIH full-length cDNA project: the Mammalian Gene Collection (MGC).</title>
        <authorList>
            <consortium name="The MGC Project Team"/>
        </authorList>
    </citation>
    <scope>NUCLEOTIDE SEQUENCE [LARGE SCALE MRNA]</scope>
    <source>
        <strain>C57BL/6J</strain>
        <tissue>Brain</tissue>
    </source>
</reference>
<reference key="3">
    <citation type="journal article" date="2010" name="Cell">
        <title>A tissue-specific atlas of mouse protein phosphorylation and expression.</title>
        <authorList>
            <person name="Huttlin E.L."/>
            <person name="Jedrychowski M.P."/>
            <person name="Elias J.E."/>
            <person name="Goswami T."/>
            <person name="Rad R."/>
            <person name="Beausoleil S.A."/>
            <person name="Villen J."/>
            <person name="Haas W."/>
            <person name="Sowa M.E."/>
            <person name="Gygi S.P."/>
        </authorList>
    </citation>
    <scope>IDENTIFICATION BY MASS SPECTROMETRY [LARGE SCALE ANALYSIS]</scope>
    <source>
        <tissue>Brain</tissue>
        <tissue>Brown adipose tissue</tissue>
        <tissue>Heart</tissue>
        <tissue>Kidney</tissue>
        <tissue>Liver</tissue>
        <tissue>Lung</tissue>
        <tissue>Pancreas</tissue>
        <tissue>Spleen</tissue>
        <tissue>Testis</tissue>
    </source>
</reference>
<proteinExistence type="evidence at protein level"/>
<accession>Q8BYA0</accession>
<protein>
    <recommendedName>
        <fullName>Tubulin-specific chaperone D</fullName>
    </recommendedName>
    <alternativeName>
        <fullName>Beta-tubulin cofactor D</fullName>
    </alternativeName>
    <alternativeName>
        <fullName>Tubulin-folding cofactor D</fullName>
    </alternativeName>
</protein>
<feature type="chain" id="PRO_0000080050" description="Tubulin-specific chaperone D">
    <location>
        <begin position="1"/>
        <end position="1196"/>
    </location>
</feature>
<feature type="repeat" description="HEAT 1">
    <location>
        <begin position="363"/>
        <end position="401"/>
    </location>
</feature>
<feature type="repeat" description="HEAT 2">
    <location>
        <begin position="599"/>
        <end position="634"/>
    </location>
</feature>
<feature type="repeat" description="HEAT 3">
    <location>
        <begin position="752"/>
        <end position="788"/>
    </location>
</feature>
<feature type="repeat" description="HEAT 4">
    <location>
        <begin position="1106"/>
        <end position="1142"/>
    </location>
</feature>